<evidence type="ECO:0000255" key="1">
    <source>
        <dbReference type="HAMAP-Rule" id="MF_01310"/>
    </source>
</evidence>
<evidence type="ECO:0000305" key="2"/>
<gene>
    <name evidence="1" type="primary">rps11</name>
</gene>
<sequence length="130" mass="14097">MAKPIPRIGSRRNGRRIPKGVIHVQASFNNTIVTVTDVRGRVVSWSSAGTCGFRGTRRGTPFAAQTAAGNAIRTVVDQGMQRAEVMIKGPGLGRDAALRAIRRSGILLSFVRDVTPMPHNGCRPPKKRRV</sequence>
<organism>
    <name type="scientific">Drimys granadensis</name>
    <dbReference type="NCBI Taxonomy" id="224735"/>
    <lineage>
        <taxon>Eukaryota</taxon>
        <taxon>Viridiplantae</taxon>
        <taxon>Streptophyta</taxon>
        <taxon>Embryophyta</taxon>
        <taxon>Tracheophyta</taxon>
        <taxon>Spermatophyta</taxon>
        <taxon>Magnoliopsida</taxon>
        <taxon>Magnoliidae</taxon>
        <taxon>Canellales</taxon>
        <taxon>Winteraceae</taxon>
        <taxon>Drimys</taxon>
    </lineage>
</organism>
<accession>Q06GW4</accession>
<reference key="1">
    <citation type="journal article" date="2006" name="BMC Evol. Biol.">
        <title>Complete plastid genome sequences of Drimys, Liriodendron, and Piper: implications for the phylogenetic relationships of magnoliids.</title>
        <authorList>
            <person name="Cai Z."/>
            <person name="Penaflor C."/>
            <person name="Kuehl J.V."/>
            <person name="Leebens-Mack J."/>
            <person name="Carlson J.E."/>
            <person name="dePamphilis C.W."/>
            <person name="Boore J.L."/>
            <person name="Jansen R.K."/>
        </authorList>
    </citation>
    <scope>NUCLEOTIDE SEQUENCE [LARGE SCALE GENOMIC DNA]</scope>
</reference>
<name>RR11_DRIGR</name>
<keyword id="KW-0150">Chloroplast</keyword>
<keyword id="KW-0934">Plastid</keyword>
<keyword id="KW-0687">Ribonucleoprotein</keyword>
<keyword id="KW-0689">Ribosomal protein</keyword>
<keyword id="KW-0694">RNA-binding</keyword>
<keyword id="KW-0699">rRNA-binding</keyword>
<protein>
    <recommendedName>
        <fullName evidence="1">Small ribosomal subunit protein uS11c</fullName>
    </recommendedName>
    <alternativeName>
        <fullName evidence="2">30S ribosomal protein S11, chloroplastic</fullName>
    </alternativeName>
</protein>
<comment type="subunit">
    <text evidence="1">Part of the 30S ribosomal subunit.</text>
</comment>
<comment type="subcellular location">
    <subcellularLocation>
        <location>Plastid</location>
        <location>Chloroplast</location>
    </subcellularLocation>
</comment>
<comment type="similarity">
    <text evidence="1">Belongs to the universal ribosomal protein uS11 family.</text>
</comment>
<geneLocation type="chloroplast"/>
<feature type="chain" id="PRO_0000276646" description="Small ribosomal subunit protein uS11c">
    <location>
        <begin position="1"/>
        <end position="130"/>
    </location>
</feature>
<proteinExistence type="inferred from homology"/>
<dbReference type="EMBL" id="DQ887676">
    <property type="protein sequence ID" value="ABH88329.1"/>
    <property type="molecule type" value="Genomic_DNA"/>
</dbReference>
<dbReference type="RefSeq" id="YP_784419.1">
    <property type="nucleotide sequence ID" value="NC_008456.1"/>
</dbReference>
<dbReference type="SMR" id="Q06GW4"/>
<dbReference type="GeneID" id="4363605"/>
<dbReference type="GO" id="GO:0009507">
    <property type="term" value="C:chloroplast"/>
    <property type="evidence" value="ECO:0007669"/>
    <property type="project" value="UniProtKB-SubCell"/>
</dbReference>
<dbReference type="GO" id="GO:1990904">
    <property type="term" value="C:ribonucleoprotein complex"/>
    <property type="evidence" value="ECO:0007669"/>
    <property type="project" value="UniProtKB-KW"/>
</dbReference>
<dbReference type="GO" id="GO:0005840">
    <property type="term" value="C:ribosome"/>
    <property type="evidence" value="ECO:0007669"/>
    <property type="project" value="UniProtKB-KW"/>
</dbReference>
<dbReference type="GO" id="GO:0019843">
    <property type="term" value="F:rRNA binding"/>
    <property type="evidence" value="ECO:0007669"/>
    <property type="project" value="UniProtKB-UniRule"/>
</dbReference>
<dbReference type="GO" id="GO:0003735">
    <property type="term" value="F:structural constituent of ribosome"/>
    <property type="evidence" value="ECO:0007669"/>
    <property type="project" value="InterPro"/>
</dbReference>
<dbReference type="GO" id="GO:0006412">
    <property type="term" value="P:translation"/>
    <property type="evidence" value="ECO:0007669"/>
    <property type="project" value="UniProtKB-UniRule"/>
</dbReference>
<dbReference type="FunFam" id="3.30.420.80:FF:000003">
    <property type="entry name" value="30S ribosomal protein S11, chloroplastic"/>
    <property type="match status" value="1"/>
</dbReference>
<dbReference type="Gene3D" id="3.30.420.80">
    <property type="entry name" value="Ribosomal protein S11"/>
    <property type="match status" value="1"/>
</dbReference>
<dbReference type="HAMAP" id="MF_01310">
    <property type="entry name" value="Ribosomal_uS11"/>
    <property type="match status" value="1"/>
</dbReference>
<dbReference type="InterPro" id="IPR001971">
    <property type="entry name" value="Ribosomal_uS11"/>
</dbReference>
<dbReference type="InterPro" id="IPR019981">
    <property type="entry name" value="Ribosomal_uS11_bac-type"/>
</dbReference>
<dbReference type="InterPro" id="IPR018102">
    <property type="entry name" value="Ribosomal_uS11_CS"/>
</dbReference>
<dbReference type="InterPro" id="IPR036967">
    <property type="entry name" value="Ribosomal_uS11_sf"/>
</dbReference>
<dbReference type="NCBIfam" id="NF003698">
    <property type="entry name" value="PRK05309.1"/>
    <property type="match status" value="1"/>
</dbReference>
<dbReference type="NCBIfam" id="TIGR03632">
    <property type="entry name" value="uS11_bact"/>
    <property type="match status" value="1"/>
</dbReference>
<dbReference type="PANTHER" id="PTHR11759">
    <property type="entry name" value="40S RIBOSOMAL PROTEIN S14/30S RIBOSOMAL PROTEIN S11"/>
    <property type="match status" value="1"/>
</dbReference>
<dbReference type="Pfam" id="PF00411">
    <property type="entry name" value="Ribosomal_S11"/>
    <property type="match status" value="1"/>
</dbReference>
<dbReference type="PIRSF" id="PIRSF002131">
    <property type="entry name" value="Ribosomal_S11"/>
    <property type="match status" value="1"/>
</dbReference>
<dbReference type="SUPFAM" id="SSF53137">
    <property type="entry name" value="Translational machinery components"/>
    <property type="match status" value="1"/>
</dbReference>
<dbReference type="PROSITE" id="PS00054">
    <property type="entry name" value="RIBOSOMAL_S11"/>
    <property type="match status" value="1"/>
</dbReference>